<evidence type="ECO:0000255" key="1">
    <source>
        <dbReference type="HAMAP-Rule" id="MF_00019"/>
    </source>
</evidence>
<proteinExistence type="inferred from homology"/>
<sequence>MSAQIIAIDAMGGDFGPRSIVQASIACLSATPSLHLTLVGQPSLLEDLVSGLAAADRARLQIVAASEVIGMDERPSQALRGKPDSSMRIALELVRDGKAQACVSAGNTGALMALSRFVLKTLPGIDRPAMVAAIPTQAGYCQLLDLGANVDCSAENLYQFAVMGSVAAQALGVHRPRVALLNIGTEDIKGNQQVKLAASLLQNARGLNYVGFVEGDGLYRGEADVVVCDGFVGNILLKSSEGLATMIGARIEQLFKGGVLSRAAGAVAMPLLKRLQADLAPARHNGASFLGLQGIVIKSHGSAGVQGFQSAIQRALIEIQENLPQRLHGRLEDLLL</sequence>
<organism>
    <name type="scientific">Pseudomonas putida (strain GB-1)</name>
    <dbReference type="NCBI Taxonomy" id="76869"/>
    <lineage>
        <taxon>Bacteria</taxon>
        <taxon>Pseudomonadati</taxon>
        <taxon>Pseudomonadota</taxon>
        <taxon>Gammaproteobacteria</taxon>
        <taxon>Pseudomonadales</taxon>
        <taxon>Pseudomonadaceae</taxon>
        <taxon>Pseudomonas</taxon>
    </lineage>
</organism>
<keyword id="KW-0963">Cytoplasm</keyword>
<keyword id="KW-0444">Lipid biosynthesis</keyword>
<keyword id="KW-0443">Lipid metabolism</keyword>
<keyword id="KW-0594">Phospholipid biosynthesis</keyword>
<keyword id="KW-1208">Phospholipid metabolism</keyword>
<keyword id="KW-0808">Transferase</keyword>
<accession>B0KF53</accession>
<gene>
    <name evidence="1" type="primary">plsX</name>
    <name type="ordered locus">PputGB1_1488</name>
</gene>
<reference key="1">
    <citation type="submission" date="2008-01" db="EMBL/GenBank/DDBJ databases">
        <title>Complete sequence of Pseudomonas putida GB-1.</title>
        <authorList>
            <consortium name="US DOE Joint Genome Institute"/>
            <person name="Copeland A."/>
            <person name="Lucas S."/>
            <person name="Lapidus A."/>
            <person name="Barry K."/>
            <person name="Glavina del Rio T."/>
            <person name="Dalin E."/>
            <person name="Tice H."/>
            <person name="Pitluck S."/>
            <person name="Bruce D."/>
            <person name="Goodwin L."/>
            <person name="Chertkov O."/>
            <person name="Brettin T."/>
            <person name="Detter J.C."/>
            <person name="Han C."/>
            <person name="Kuske C.R."/>
            <person name="Schmutz J."/>
            <person name="Larimer F."/>
            <person name="Land M."/>
            <person name="Hauser L."/>
            <person name="Kyrpides N."/>
            <person name="Kim E."/>
            <person name="McCarthy J.K."/>
            <person name="Richardson P."/>
        </authorList>
    </citation>
    <scope>NUCLEOTIDE SEQUENCE [LARGE SCALE GENOMIC DNA]</scope>
    <source>
        <strain>GB-1</strain>
    </source>
</reference>
<protein>
    <recommendedName>
        <fullName evidence="1">Phosphate acyltransferase</fullName>
        <ecNumber evidence="1">2.3.1.274</ecNumber>
    </recommendedName>
    <alternativeName>
        <fullName evidence="1">Acyl-ACP phosphotransacylase</fullName>
    </alternativeName>
    <alternativeName>
        <fullName evidence="1">Acyl-[acyl-carrier-protein]--phosphate acyltransferase</fullName>
    </alternativeName>
    <alternativeName>
        <fullName evidence="1">Phosphate-acyl-ACP acyltransferase</fullName>
    </alternativeName>
</protein>
<comment type="function">
    <text evidence="1">Catalyzes the reversible formation of acyl-phosphate (acyl-PO(4)) from acyl-[acyl-carrier-protein] (acyl-ACP). This enzyme utilizes acyl-ACP as fatty acyl donor, but not acyl-CoA.</text>
</comment>
<comment type="catalytic activity">
    <reaction evidence="1">
        <text>a fatty acyl-[ACP] + phosphate = an acyl phosphate + holo-[ACP]</text>
        <dbReference type="Rhea" id="RHEA:42292"/>
        <dbReference type="Rhea" id="RHEA-COMP:9685"/>
        <dbReference type="Rhea" id="RHEA-COMP:14125"/>
        <dbReference type="ChEBI" id="CHEBI:43474"/>
        <dbReference type="ChEBI" id="CHEBI:59918"/>
        <dbReference type="ChEBI" id="CHEBI:64479"/>
        <dbReference type="ChEBI" id="CHEBI:138651"/>
        <dbReference type="EC" id="2.3.1.274"/>
    </reaction>
</comment>
<comment type="pathway">
    <text evidence="1">Lipid metabolism; phospholipid metabolism.</text>
</comment>
<comment type="subunit">
    <text evidence="1">Homodimer. Probably interacts with PlsY.</text>
</comment>
<comment type="subcellular location">
    <subcellularLocation>
        <location evidence="1">Cytoplasm</location>
    </subcellularLocation>
    <text evidence="1">Associated with the membrane possibly through PlsY.</text>
</comment>
<comment type="similarity">
    <text evidence="1">Belongs to the PlsX family.</text>
</comment>
<name>PLSX_PSEPG</name>
<dbReference type="EC" id="2.3.1.274" evidence="1"/>
<dbReference type="EMBL" id="CP000926">
    <property type="protein sequence ID" value="ABY97393.1"/>
    <property type="molecule type" value="Genomic_DNA"/>
</dbReference>
<dbReference type="SMR" id="B0KF53"/>
<dbReference type="KEGG" id="ppg:PputGB1_1488"/>
<dbReference type="eggNOG" id="COG0416">
    <property type="taxonomic scope" value="Bacteria"/>
</dbReference>
<dbReference type="HOGENOM" id="CLU_039379_1_0_6"/>
<dbReference type="UniPathway" id="UPA00085"/>
<dbReference type="Proteomes" id="UP000002157">
    <property type="component" value="Chromosome"/>
</dbReference>
<dbReference type="GO" id="GO:0005737">
    <property type="term" value="C:cytoplasm"/>
    <property type="evidence" value="ECO:0007669"/>
    <property type="project" value="UniProtKB-SubCell"/>
</dbReference>
<dbReference type="GO" id="GO:0043811">
    <property type="term" value="F:phosphate:acyl-[acyl carrier protein] acyltransferase activity"/>
    <property type="evidence" value="ECO:0007669"/>
    <property type="project" value="UniProtKB-UniRule"/>
</dbReference>
<dbReference type="GO" id="GO:0006633">
    <property type="term" value="P:fatty acid biosynthetic process"/>
    <property type="evidence" value="ECO:0007669"/>
    <property type="project" value="UniProtKB-UniRule"/>
</dbReference>
<dbReference type="GO" id="GO:0008654">
    <property type="term" value="P:phospholipid biosynthetic process"/>
    <property type="evidence" value="ECO:0007669"/>
    <property type="project" value="UniProtKB-KW"/>
</dbReference>
<dbReference type="Gene3D" id="3.40.718.10">
    <property type="entry name" value="Isopropylmalate Dehydrogenase"/>
    <property type="match status" value="1"/>
</dbReference>
<dbReference type="HAMAP" id="MF_00019">
    <property type="entry name" value="PlsX"/>
    <property type="match status" value="1"/>
</dbReference>
<dbReference type="InterPro" id="IPR003664">
    <property type="entry name" value="FA_synthesis"/>
</dbReference>
<dbReference type="InterPro" id="IPR012281">
    <property type="entry name" value="Phospholipid_synth_PlsX-like"/>
</dbReference>
<dbReference type="NCBIfam" id="TIGR00182">
    <property type="entry name" value="plsX"/>
    <property type="match status" value="1"/>
</dbReference>
<dbReference type="PANTHER" id="PTHR30100">
    <property type="entry name" value="FATTY ACID/PHOSPHOLIPID SYNTHESIS PROTEIN PLSX"/>
    <property type="match status" value="1"/>
</dbReference>
<dbReference type="PANTHER" id="PTHR30100:SF1">
    <property type="entry name" value="PHOSPHATE ACYLTRANSFERASE"/>
    <property type="match status" value="1"/>
</dbReference>
<dbReference type="Pfam" id="PF02504">
    <property type="entry name" value="FA_synthesis"/>
    <property type="match status" value="1"/>
</dbReference>
<dbReference type="PIRSF" id="PIRSF002465">
    <property type="entry name" value="Phsphlp_syn_PlsX"/>
    <property type="match status" value="1"/>
</dbReference>
<dbReference type="SUPFAM" id="SSF53659">
    <property type="entry name" value="Isocitrate/Isopropylmalate dehydrogenase-like"/>
    <property type="match status" value="1"/>
</dbReference>
<feature type="chain" id="PRO_1000074170" description="Phosphate acyltransferase">
    <location>
        <begin position="1"/>
        <end position="336"/>
    </location>
</feature>